<feature type="chain" id="PRO_0000228917" description="Small ribosomal subunit protein uS4">
    <location>
        <begin position="1"/>
        <end position="206"/>
    </location>
</feature>
<feature type="domain" description="S4 RNA-binding" evidence="1">
    <location>
        <begin position="96"/>
        <end position="156"/>
    </location>
</feature>
<accession>Q4ZMR7</accession>
<organism>
    <name type="scientific">Pseudomonas syringae pv. syringae (strain B728a)</name>
    <dbReference type="NCBI Taxonomy" id="205918"/>
    <lineage>
        <taxon>Bacteria</taxon>
        <taxon>Pseudomonadati</taxon>
        <taxon>Pseudomonadota</taxon>
        <taxon>Gammaproteobacteria</taxon>
        <taxon>Pseudomonadales</taxon>
        <taxon>Pseudomonadaceae</taxon>
        <taxon>Pseudomonas</taxon>
        <taxon>Pseudomonas syringae</taxon>
    </lineage>
</organism>
<comment type="function">
    <text evidence="1">One of the primary rRNA binding proteins, it binds directly to 16S rRNA where it nucleates assembly of the body of the 30S subunit.</text>
</comment>
<comment type="function">
    <text evidence="1">With S5 and S12 plays an important role in translational accuracy.</text>
</comment>
<comment type="subunit">
    <text evidence="1">Part of the 30S ribosomal subunit. Contacts protein S5. The interaction surface between S4 and S5 is involved in control of translational fidelity.</text>
</comment>
<comment type="similarity">
    <text evidence="1">Belongs to the universal ribosomal protein uS4 family.</text>
</comment>
<keyword id="KW-0687">Ribonucleoprotein</keyword>
<keyword id="KW-0689">Ribosomal protein</keyword>
<keyword id="KW-0694">RNA-binding</keyword>
<keyword id="KW-0699">rRNA-binding</keyword>
<protein>
    <recommendedName>
        <fullName evidence="1">Small ribosomal subunit protein uS4</fullName>
    </recommendedName>
    <alternativeName>
        <fullName evidence="2">30S ribosomal protein S4</fullName>
    </alternativeName>
</protein>
<gene>
    <name evidence="1" type="primary">rpsD</name>
    <name type="ordered locus">Psyr_4525</name>
</gene>
<dbReference type="EMBL" id="CP000075">
    <property type="protein sequence ID" value="AAY39555.1"/>
    <property type="molecule type" value="Genomic_DNA"/>
</dbReference>
<dbReference type="RefSeq" id="WP_002555465.1">
    <property type="nucleotide sequence ID" value="NC_007005.1"/>
</dbReference>
<dbReference type="RefSeq" id="YP_237593.1">
    <property type="nucleotide sequence ID" value="NC_007005.1"/>
</dbReference>
<dbReference type="SMR" id="Q4ZMR7"/>
<dbReference type="STRING" id="205918.Psyr_4525"/>
<dbReference type="GeneID" id="96221006"/>
<dbReference type="KEGG" id="psb:Psyr_4525"/>
<dbReference type="PATRIC" id="fig|205918.7.peg.4663"/>
<dbReference type="eggNOG" id="COG0522">
    <property type="taxonomic scope" value="Bacteria"/>
</dbReference>
<dbReference type="HOGENOM" id="CLU_092403_0_2_6"/>
<dbReference type="OrthoDB" id="9803672at2"/>
<dbReference type="Proteomes" id="UP000000426">
    <property type="component" value="Chromosome"/>
</dbReference>
<dbReference type="GO" id="GO:0015935">
    <property type="term" value="C:small ribosomal subunit"/>
    <property type="evidence" value="ECO:0007669"/>
    <property type="project" value="InterPro"/>
</dbReference>
<dbReference type="GO" id="GO:0019843">
    <property type="term" value="F:rRNA binding"/>
    <property type="evidence" value="ECO:0007669"/>
    <property type="project" value="UniProtKB-UniRule"/>
</dbReference>
<dbReference type="GO" id="GO:0003735">
    <property type="term" value="F:structural constituent of ribosome"/>
    <property type="evidence" value="ECO:0007669"/>
    <property type="project" value="InterPro"/>
</dbReference>
<dbReference type="GO" id="GO:0042274">
    <property type="term" value="P:ribosomal small subunit biogenesis"/>
    <property type="evidence" value="ECO:0007669"/>
    <property type="project" value="TreeGrafter"/>
</dbReference>
<dbReference type="GO" id="GO:0006412">
    <property type="term" value="P:translation"/>
    <property type="evidence" value="ECO:0007669"/>
    <property type="project" value="UniProtKB-UniRule"/>
</dbReference>
<dbReference type="CDD" id="cd00165">
    <property type="entry name" value="S4"/>
    <property type="match status" value="1"/>
</dbReference>
<dbReference type="FunFam" id="1.10.1050.10:FF:000001">
    <property type="entry name" value="30S ribosomal protein S4"/>
    <property type="match status" value="1"/>
</dbReference>
<dbReference type="FunFam" id="3.10.290.10:FF:000001">
    <property type="entry name" value="30S ribosomal protein S4"/>
    <property type="match status" value="1"/>
</dbReference>
<dbReference type="Gene3D" id="1.10.1050.10">
    <property type="entry name" value="Ribosomal Protein S4 Delta 41, Chain A, domain 1"/>
    <property type="match status" value="1"/>
</dbReference>
<dbReference type="Gene3D" id="3.10.290.10">
    <property type="entry name" value="RNA-binding S4 domain"/>
    <property type="match status" value="1"/>
</dbReference>
<dbReference type="HAMAP" id="MF_01306_B">
    <property type="entry name" value="Ribosomal_uS4_B"/>
    <property type="match status" value="1"/>
</dbReference>
<dbReference type="InterPro" id="IPR022801">
    <property type="entry name" value="Ribosomal_uS4"/>
</dbReference>
<dbReference type="InterPro" id="IPR005709">
    <property type="entry name" value="Ribosomal_uS4_bac-type"/>
</dbReference>
<dbReference type="InterPro" id="IPR018079">
    <property type="entry name" value="Ribosomal_uS4_CS"/>
</dbReference>
<dbReference type="InterPro" id="IPR001912">
    <property type="entry name" value="Ribosomal_uS4_N"/>
</dbReference>
<dbReference type="InterPro" id="IPR002942">
    <property type="entry name" value="S4_RNA-bd"/>
</dbReference>
<dbReference type="InterPro" id="IPR036986">
    <property type="entry name" value="S4_RNA-bd_sf"/>
</dbReference>
<dbReference type="NCBIfam" id="NF003717">
    <property type="entry name" value="PRK05327.1"/>
    <property type="match status" value="1"/>
</dbReference>
<dbReference type="NCBIfam" id="TIGR01017">
    <property type="entry name" value="rpsD_bact"/>
    <property type="match status" value="1"/>
</dbReference>
<dbReference type="PANTHER" id="PTHR11831">
    <property type="entry name" value="30S 40S RIBOSOMAL PROTEIN"/>
    <property type="match status" value="1"/>
</dbReference>
<dbReference type="PANTHER" id="PTHR11831:SF4">
    <property type="entry name" value="SMALL RIBOSOMAL SUBUNIT PROTEIN US4M"/>
    <property type="match status" value="1"/>
</dbReference>
<dbReference type="Pfam" id="PF00163">
    <property type="entry name" value="Ribosomal_S4"/>
    <property type="match status" value="1"/>
</dbReference>
<dbReference type="Pfam" id="PF01479">
    <property type="entry name" value="S4"/>
    <property type="match status" value="1"/>
</dbReference>
<dbReference type="SMART" id="SM01390">
    <property type="entry name" value="Ribosomal_S4"/>
    <property type="match status" value="1"/>
</dbReference>
<dbReference type="SMART" id="SM00363">
    <property type="entry name" value="S4"/>
    <property type="match status" value="1"/>
</dbReference>
<dbReference type="SUPFAM" id="SSF55174">
    <property type="entry name" value="Alpha-L RNA-binding motif"/>
    <property type="match status" value="1"/>
</dbReference>
<dbReference type="PROSITE" id="PS00632">
    <property type="entry name" value="RIBOSOMAL_S4"/>
    <property type="match status" value="1"/>
</dbReference>
<dbReference type="PROSITE" id="PS50889">
    <property type="entry name" value="S4"/>
    <property type="match status" value="1"/>
</dbReference>
<reference key="1">
    <citation type="journal article" date="2005" name="Proc. Natl. Acad. Sci. U.S.A.">
        <title>Comparison of the complete genome sequences of Pseudomonas syringae pv. syringae B728a and pv. tomato DC3000.</title>
        <authorList>
            <person name="Feil H."/>
            <person name="Feil W.S."/>
            <person name="Chain P."/>
            <person name="Larimer F."/>
            <person name="Dibartolo G."/>
            <person name="Copeland A."/>
            <person name="Lykidis A."/>
            <person name="Trong S."/>
            <person name="Nolan M."/>
            <person name="Goltsman E."/>
            <person name="Thiel J."/>
            <person name="Malfatti S."/>
            <person name="Loper J.E."/>
            <person name="Lapidus A."/>
            <person name="Detter J.C."/>
            <person name="Land M."/>
            <person name="Richardson P.M."/>
            <person name="Kyrpides N.C."/>
            <person name="Ivanova N."/>
            <person name="Lindow S.E."/>
        </authorList>
    </citation>
    <scope>NUCLEOTIDE SEQUENCE [LARGE SCALE GENOMIC DNA]</scope>
    <source>
        <strain>B728a</strain>
    </source>
</reference>
<proteinExistence type="inferred from homology"/>
<evidence type="ECO:0000255" key="1">
    <source>
        <dbReference type="HAMAP-Rule" id="MF_01306"/>
    </source>
</evidence>
<evidence type="ECO:0000305" key="2"/>
<sequence>MARYIGPKCKLARREGTDLFLKSGVRAIESKCNIEAAPGIHGQRRGRQSDYGTQLREKQKVRRIYGVLERQFSGYYKEAAGKKGATGENLLQLLECRLDNVVYRMGFGSTRAESRQLVSHKSVSVNGKTVNVPSYQVRAGDVVAIREKAKNQLRIVQALDLCAQRGRVEWVEVDTEKKSGVFKNVPARSDLSADINESLIVELYSK</sequence>
<name>RS4_PSEU2</name>